<proteinExistence type="inferred from homology"/>
<keyword id="KW-0240">DNA-directed RNA polymerase</keyword>
<keyword id="KW-0548">Nucleotidyltransferase</keyword>
<keyword id="KW-0804">Transcription</keyword>
<keyword id="KW-0808">Transferase</keyword>
<dbReference type="EC" id="2.7.7.6" evidence="1"/>
<dbReference type="EMBL" id="CP000749">
    <property type="protein sequence ID" value="ABR73280.1"/>
    <property type="molecule type" value="Genomic_DNA"/>
</dbReference>
<dbReference type="SMR" id="A6W3K1"/>
<dbReference type="STRING" id="400668.Mmwyl1_4385"/>
<dbReference type="KEGG" id="mmw:Mmwyl1_4385"/>
<dbReference type="eggNOG" id="COG1758">
    <property type="taxonomic scope" value="Bacteria"/>
</dbReference>
<dbReference type="HOGENOM" id="CLU_125406_5_2_6"/>
<dbReference type="OrthoDB" id="9796300at2"/>
<dbReference type="GO" id="GO:0000428">
    <property type="term" value="C:DNA-directed RNA polymerase complex"/>
    <property type="evidence" value="ECO:0007669"/>
    <property type="project" value="UniProtKB-KW"/>
</dbReference>
<dbReference type="GO" id="GO:0003677">
    <property type="term" value="F:DNA binding"/>
    <property type="evidence" value="ECO:0007669"/>
    <property type="project" value="UniProtKB-UniRule"/>
</dbReference>
<dbReference type="GO" id="GO:0003899">
    <property type="term" value="F:DNA-directed RNA polymerase activity"/>
    <property type="evidence" value="ECO:0007669"/>
    <property type="project" value="UniProtKB-UniRule"/>
</dbReference>
<dbReference type="GO" id="GO:0006351">
    <property type="term" value="P:DNA-templated transcription"/>
    <property type="evidence" value="ECO:0007669"/>
    <property type="project" value="UniProtKB-UniRule"/>
</dbReference>
<dbReference type="Gene3D" id="3.90.940.10">
    <property type="match status" value="1"/>
</dbReference>
<dbReference type="HAMAP" id="MF_00366">
    <property type="entry name" value="RNApol_bact_RpoZ"/>
    <property type="match status" value="1"/>
</dbReference>
<dbReference type="InterPro" id="IPR003716">
    <property type="entry name" value="DNA-dir_RNA_pol_omega"/>
</dbReference>
<dbReference type="InterPro" id="IPR006110">
    <property type="entry name" value="Pol_omega/Rpo6/RPB6"/>
</dbReference>
<dbReference type="InterPro" id="IPR036161">
    <property type="entry name" value="RPB6/omega-like_sf"/>
</dbReference>
<dbReference type="NCBIfam" id="TIGR00690">
    <property type="entry name" value="rpoZ"/>
    <property type="match status" value="1"/>
</dbReference>
<dbReference type="PANTHER" id="PTHR34476">
    <property type="entry name" value="DNA-DIRECTED RNA POLYMERASE SUBUNIT OMEGA"/>
    <property type="match status" value="1"/>
</dbReference>
<dbReference type="PANTHER" id="PTHR34476:SF1">
    <property type="entry name" value="DNA-DIRECTED RNA POLYMERASE SUBUNIT OMEGA"/>
    <property type="match status" value="1"/>
</dbReference>
<dbReference type="Pfam" id="PF01192">
    <property type="entry name" value="RNA_pol_Rpb6"/>
    <property type="match status" value="1"/>
</dbReference>
<dbReference type="SMART" id="SM01409">
    <property type="entry name" value="RNA_pol_Rpb6"/>
    <property type="match status" value="1"/>
</dbReference>
<dbReference type="SUPFAM" id="SSF63562">
    <property type="entry name" value="RPB6/omega subunit-like"/>
    <property type="match status" value="1"/>
</dbReference>
<name>RPOZ_MARMS</name>
<protein>
    <recommendedName>
        <fullName evidence="1">DNA-directed RNA polymerase subunit omega</fullName>
        <shortName evidence="1">RNAP omega subunit</shortName>
        <ecNumber evidence="1">2.7.7.6</ecNumber>
    </recommendedName>
    <alternativeName>
        <fullName evidence="1">RNA polymerase omega subunit</fullName>
    </alternativeName>
    <alternativeName>
        <fullName evidence="1">Transcriptase subunit omega</fullName>
    </alternativeName>
</protein>
<organism>
    <name type="scientific">Marinomonas sp. (strain MWYL1)</name>
    <dbReference type="NCBI Taxonomy" id="400668"/>
    <lineage>
        <taxon>Bacteria</taxon>
        <taxon>Pseudomonadati</taxon>
        <taxon>Pseudomonadota</taxon>
        <taxon>Gammaproteobacteria</taxon>
        <taxon>Oceanospirillales</taxon>
        <taxon>Oceanospirillaceae</taxon>
        <taxon>Marinomonas</taxon>
    </lineage>
</organism>
<comment type="function">
    <text evidence="1">Promotes RNA polymerase assembly. Latches the N- and C-terminal regions of the beta' subunit thereby facilitating its interaction with the beta and alpha subunits.</text>
</comment>
<comment type="catalytic activity">
    <reaction evidence="1">
        <text>RNA(n) + a ribonucleoside 5'-triphosphate = RNA(n+1) + diphosphate</text>
        <dbReference type="Rhea" id="RHEA:21248"/>
        <dbReference type="Rhea" id="RHEA-COMP:14527"/>
        <dbReference type="Rhea" id="RHEA-COMP:17342"/>
        <dbReference type="ChEBI" id="CHEBI:33019"/>
        <dbReference type="ChEBI" id="CHEBI:61557"/>
        <dbReference type="ChEBI" id="CHEBI:140395"/>
        <dbReference type="EC" id="2.7.7.6"/>
    </reaction>
</comment>
<comment type="subunit">
    <text evidence="1">The RNAP catalytic core consists of 2 alpha, 1 beta, 1 beta' and 1 omega subunit. When a sigma factor is associated with the core the holoenzyme is formed, which can initiate transcription.</text>
</comment>
<comment type="similarity">
    <text evidence="1">Belongs to the RNA polymerase subunit omega family.</text>
</comment>
<gene>
    <name evidence="1" type="primary">rpoZ</name>
    <name type="ordered locus">Mmwyl1_4385</name>
</gene>
<accession>A6W3K1</accession>
<feature type="chain" id="PRO_1000079634" description="DNA-directed RNA polymerase subunit omega">
    <location>
        <begin position="1"/>
        <end position="74"/>
    </location>
</feature>
<reference key="1">
    <citation type="submission" date="2007-06" db="EMBL/GenBank/DDBJ databases">
        <title>Complete sequence of Marinomonas sp. MWYL1.</title>
        <authorList>
            <consortium name="US DOE Joint Genome Institute"/>
            <person name="Copeland A."/>
            <person name="Lucas S."/>
            <person name="Lapidus A."/>
            <person name="Barry K."/>
            <person name="Glavina del Rio T."/>
            <person name="Dalin E."/>
            <person name="Tice H."/>
            <person name="Pitluck S."/>
            <person name="Kiss H."/>
            <person name="Brettin T."/>
            <person name="Bruce D."/>
            <person name="Detter J.C."/>
            <person name="Han C."/>
            <person name="Schmutz J."/>
            <person name="Larimer F."/>
            <person name="Land M."/>
            <person name="Hauser L."/>
            <person name="Kyrpides N."/>
            <person name="Kim E."/>
            <person name="Johnston A.W.B."/>
            <person name="Todd J.D."/>
            <person name="Rogers R."/>
            <person name="Wexler M."/>
            <person name="Bond P.L."/>
            <person name="Li Y."/>
            <person name="Richardson P."/>
        </authorList>
    </citation>
    <scope>NUCLEOTIDE SEQUENCE [LARGE SCALE GENOMIC DNA]</scope>
    <source>
        <strain>MWYL1</strain>
    </source>
</reference>
<sequence>MARVTVEDCLENVDNRFELVMVASKRARQLATGGEDAKVPLEGDKVTVVALREIAENLINAKNVDQQKRPLHEF</sequence>
<evidence type="ECO:0000255" key="1">
    <source>
        <dbReference type="HAMAP-Rule" id="MF_00366"/>
    </source>
</evidence>